<keyword id="KW-0328">Glycosyltransferase</keyword>
<keyword id="KW-0464">Manganese</keyword>
<keyword id="KW-0472">Membrane</keyword>
<keyword id="KW-0479">Metal-binding</keyword>
<keyword id="KW-1185">Reference proteome</keyword>
<keyword id="KW-0808">Transferase</keyword>
<keyword id="KW-0812">Transmembrane</keyword>
<keyword id="KW-1133">Transmembrane helix</keyword>
<comment type="cofactor">
    <cofactor evidence="2">
        <name>Mn(2+)</name>
        <dbReference type="ChEBI" id="CHEBI:29035"/>
    </cofactor>
</comment>
<comment type="subcellular location">
    <subcellularLocation>
        <location evidence="4">Membrane</location>
        <topology evidence="4">Multi-pass membrane protein</topology>
    </subcellularLocation>
</comment>
<comment type="similarity">
    <text evidence="4">Belongs to the glycosyltransferase 8 family. Glycogenin subfamily.</text>
</comment>
<comment type="sequence caution" evidence="4">
    <conflict type="erroneous gene model prediction">
        <sequence resource="EMBL-CDS" id="CAB10435"/>
    </conflict>
</comment>
<comment type="sequence caution" evidence="4">
    <conflict type="erroneous gene model prediction">
        <sequence resource="EMBL-CDS" id="CAB78702"/>
    </conflict>
</comment>
<dbReference type="EC" id="2.4.1.-"/>
<dbReference type="EMBL" id="Z97341">
    <property type="protein sequence ID" value="CAB10435.1"/>
    <property type="status" value="ALT_SEQ"/>
    <property type="molecule type" value="Genomic_DNA"/>
</dbReference>
<dbReference type="EMBL" id="AL161544">
    <property type="protein sequence ID" value="CAB78702.1"/>
    <property type="status" value="ALT_SEQ"/>
    <property type="molecule type" value="Genomic_DNA"/>
</dbReference>
<dbReference type="EMBL" id="CP002687">
    <property type="protein sequence ID" value="AEE83775.1"/>
    <property type="molecule type" value="Genomic_DNA"/>
</dbReference>
<dbReference type="PIR" id="A71433">
    <property type="entry name" value="A71433"/>
</dbReference>
<dbReference type="RefSeq" id="NP_193393.4">
    <property type="nucleotide sequence ID" value="NM_117761.5"/>
</dbReference>
<dbReference type="SMR" id="F4JMI5"/>
<dbReference type="FunCoup" id="F4JMI5">
    <property type="interactions" value="3"/>
</dbReference>
<dbReference type="STRING" id="3702.F4JMI5"/>
<dbReference type="CAZy" id="GT8">
    <property type="family name" value="Glycosyltransferase Family 8"/>
</dbReference>
<dbReference type="iPTMnet" id="F4JMI5"/>
<dbReference type="PaxDb" id="3702-AT4G16600.1"/>
<dbReference type="ProteomicsDB" id="247324"/>
<dbReference type="EnsemblPlants" id="AT4G16600.1">
    <property type="protein sequence ID" value="AT4G16600.1"/>
    <property type="gene ID" value="AT4G16600"/>
</dbReference>
<dbReference type="GeneID" id="827361"/>
<dbReference type="Gramene" id="AT4G16600.1">
    <property type="protein sequence ID" value="AT4G16600.1"/>
    <property type="gene ID" value="AT4G16600"/>
</dbReference>
<dbReference type="KEGG" id="ath:AT4G16600"/>
<dbReference type="Araport" id="AT4G16600"/>
<dbReference type="TAIR" id="AT4G16600">
    <property type="gene designation" value="PGSIP8"/>
</dbReference>
<dbReference type="eggNOG" id="KOG1950">
    <property type="taxonomic scope" value="Eukaryota"/>
</dbReference>
<dbReference type="HOGENOM" id="CLU_034176_0_0_1"/>
<dbReference type="InParanoid" id="F4JMI5"/>
<dbReference type="OMA" id="WIHNLEE"/>
<dbReference type="PRO" id="PR:F4JMI5"/>
<dbReference type="Proteomes" id="UP000006548">
    <property type="component" value="Chromosome 4"/>
</dbReference>
<dbReference type="ExpressionAtlas" id="F4JMI5">
    <property type="expression patterns" value="baseline and differential"/>
</dbReference>
<dbReference type="GO" id="GO:0016020">
    <property type="term" value="C:membrane"/>
    <property type="evidence" value="ECO:0007669"/>
    <property type="project" value="UniProtKB-SubCell"/>
</dbReference>
<dbReference type="GO" id="GO:0016757">
    <property type="term" value="F:glycosyltransferase activity"/>
    <property type="evidence" value="ECO:0007669"/>
    <property type="project" value="UniProtKB-KW"/>
</dbReference>
<dbReference type="GO" id="GO:0046872">
    <property type="term" value="F:metal ion binding"/>
    <property type="evidence" value="ECO:0007669"/>
    <property type="project" value="UniProtKB-KW"/>
</dbReference>
<dbReference type="CDD" id="cd02537">
    <property type="entry name" value="GT8_Glycogenin"/>
    <property type="match status" value="1"/>
</dbReference>
<dbReference type="Gene3D" id="3.90.550.10">
    <property type="entry name" value="Spore Coat Polysaccharide Biosynthesis Protein SpsA, Chain A"/>
    <property type="match status" value="1"/>
</dbReference>
<dbReference type="InterPro" id="IPR050587">
    <property type="entry name" value="GNT1/Glycosyltrans_8"/>
</dbReference>
<dbReference type="InterPro" id="IPR029044">
    <property type="entry name" value="Nucleotide-diphossugar_trans"/>
</dbReference>
<dbReference type="PANTHER" id="PTHR11183">
    <property type="entry name" value="GLYCOGENIN SUBFAMILY MEMBER"/>
    <property type="match status" value="1"/>
</dbReference>
<dbReference type="SUPFAM" id="SSF53448">
    <property type="entry name" value="Nucleotide-diphospho-sugar transferases"/>
    <property type="match status" value="1"/>
</dbReference>
<name>GUX7_ARATH</name>
<organism>
    <name type="scientific">Arabidopsis thaliana</name>
    <name type="common">Mouse-ear cress</name>
    <dbReference type="NCBI Taxonomy" id="3702"/>
    <lineage>
        <taxon>Eukaryota</taxon>
        <taxon>Viridiplantae</taxon>
        <taxon>Streptophyta</taxon>
        <taxon>Embryophyta</taxon>
        <taxon>Tracheophyta</taxon>
        <taxon>Spermatophyta</taxon>
        <taxon>Magnoliopsida</taxon>
        <taxon>eudicotyledons</taxon>
        <taxon>Gunneridae</taxon>
        <taxon>Pentapetalae</taxon>
        <taxon>rosids</taxon>
        <taxon>malvids</taxon>
        <taxon>Brassicales</taxon>
        <taxon>Brassicaceae</taxon>
        <taxon>Camelineae</taxon>
        <taxon>Arabidopsis</taxon>
    </lineage>
</organism>
<proteinExistence type="inferred from homology"/>
<gene>
    <name type="primary">PGSIP7</name>
    <name type="ordered locus">At4g16600</name>
    <name type="ORF">dl4325w</name>
    <name type="ORF">FCAALL.404</name>
</gene>
<sequence>MDLQRTLMFSCWVLSLLIIKTTAYNEKQLFQPLETENANAMTAVMERGLKTQRRPEHKNAYATMMYMGTPRDYEFYVATRVLIRSLKSLHVDADIVVIASLDVPINWIHALEEEDGAKVVRVENLENPYKKQTNFDNRFKLSLNKLYAWSLSDYDRVVMLDVDNLFLKNTDELFQCGQFCAVFINPCIFHTGLFVLQPSMEVFRDMLHELEVKRDNPDGADQGFLVSYFSDLLNQPLFRPPPDNRTALKGHFRLPLGYQMDASYYYLKLRWNVPCGPNSVITFPGAVWLKPWYWWSWPVLPLGLSWHHQRRYTISYSAEMPWVLTQAVFYLGIILVTRLARPNMTKLCYRRSDKNLSMIQTAFKFVALLFILSAYIIPFFIIPQTIHPLIGWSLYLTGSFALSTIPINAFLLPILPVITPWLGIFGTLLVMAFPSYPDGVVRALSVFGYAFCCAPFLWVSFVKITSHLQIMIDKEVLFPRLGESGVTSGLSKLY</sequence>
<protein>
    <recommendedName>
        <fullName>Putative glucuronosyltransferase PGSIP7</fullName>
        <ecNumber>2.4.1.-</ecNumber>
    </recommendedName>
    <alternativeName>
        <fullName>Glycogenin-like protein 7</fullName>
    </alternativeName>
    <alternativeName>
        <fullName>Plant glycogenin-like starch initiation protein 7</fullName>
    </alternativeName>
</protein>
<accession>F4JMI5</accession>
<accession>O23503</accession>
<feature type="chain" id="PRO_0000416739" description="Putative glucuronosyltransferase PGSIP7">
    <location>
        <begin position="1"/>
        <end position="494"/>
    </location>
</feature>
<feature type="transmembrane region" description="Helical" evidence="3">
    <location>
        <begin position="4"/>
        <end position="24"/>
    </location>
</feature>
<feature type="transmembrane region" description="Helical" evidence="3">
    <location>
        <begin position="316"/>
        <end position="336"/>
    </location>
</feature>
<feature type="transmembrane region" description="Helical" evidence="3">
    <location>
        <begin position="362"/>
        <end position="382"/>
    </location>
</feature>
<feature type="transmembrane region" description="Helical" evidence="3">
    <location>
        <begin position="389"/>
        <end position="409"/>
    </location>
</feature>
<feature type="transmembrane region" description="Helical" evidence="3">
    <location>
        <begin position="410"/>
        <end position="430"/>
    </location>
</feature>
<feature type="transmembrane region" description="Helical" evidence="3">
    <location>
        <begin position="444"/>
        <end position="464"/>
    </location>
</feature>
<feature type="binding site" evidence="2">
    <location>
        <position position="161"/>
    </location>
    <ligand>
        <name>Mn(2+)</name>
        <dbReference type="ChEBI" id="CHEBI:29035"/>
    </ligand>
</feature>
<feature type="binding site" evidence="2">
    <location>
        <position position="163"/>
    </location>
    <ligand>
        <name>Mn(2+)</name>
        <dbReference type="ChEBI" id="CHEBI:29035"/>
    </ligand>
</feature>
<feature type="site" description="Important for catalytic activity" evidence="1">
    <location>
        <position position="145"/>
    </location>
</feature>
<reference key="1">
    <citation type="journal article" date="1998" name="Nature">
        <title>Analysis of 1.9 Mb of contiguous sequence from chromosome 4 of Arabidopsis thaliana.</title>
        <authorList>
            <person name="Bevan M."/>
            <person name="Bancroft I."/>
            <person name="Bent E."/>
            <person name="Love K."/>
            <person name="Goodman H.M."/>
            <person name="Dean C."/>
            <person name="Bergkamp R."/>
            <person name="Dirkse W."/>
            <person name="van Staveren M."/>
            <person name="Stiekema W."/>
            <person name="Drost L."/>
            <person name="Ridley P."/>
            <person name="Hudson S.-A."/>
            <person name="Patel K."/>
            <person name="Murphy G."/>
            <person name="Piffanelli P."/>
            <person name="Wedler H."/>
            <person name="Wedler E."/>
            <person name="Wambutt R."/>
            <person name="Weitzenegger T."/>
            <person name="Pohl T."/>
            <person name="Terryn N."/>
            <person name="Gielen J."/>
            <person name="Villarroel R."/>
            <person name="De Clercq R."/>
            <person name="van Montagu M."/>
            <person name="Lecharny A."/>
            <person name="Aubourg S."/>
            <person name="Gy I."/>
            <person name="Kreis M."/>
            <person name="Lao N."/>
            <person name="Kavanagh T."/>
            <person name="Hempel S."/>
            <person name="Kotter P."/>
            <person name="Entian K.-D."/>
            <person name="Rieger M."/>
            <person name="Schaefer M."/>
            <person name="Funk B."/>
            <person name="Mueller-Auer S."/>
            <person name="Silvey M."/>
            <person name="James R."/>
            <person name="Monfort A."/>
            <person name="Pons A."/>
            <person name="Puigdomenech P."/>
            <person name="Douka A."/>
            <person name="Voukelatou E."/>
            <person name="Milioni D."/>
            <person name="Hatzopoulos P."/>
            <person name="Piravandi E."/>
            <person name="Obermaier B."/>
            <person name="Hilbert H."/>
            <person name="Duesterhoeft A."/>
            <person name="Moores T."/>
            <person name="Jones J.D.G."/>
            <person name="Eneva T."/>
            <person name="Palme K."/>
            <person name="Benes V."/>
            <person name="Rechmann S."/>
            <person name="Ansorge W."/>
            <person name="Cooke R."/>
            <person name="Berger C."/>
            <person name="Delseny M."/>
            <person name="Voet M."/>
            <person name="Volckaert G."/>
            <person name="Mewes H.-W."/>
            <person name="Klosterman S."/>
            <person name="Schueller C."/>
            <person name="Chalwatzis N."/>
        </authorList>
    </citation>
    <scope>NUCLEOTIDE SEQUENCE [LARGE SCALE GENOMIC DNA]</scope>
    <source>
        <strain>cv. Columbia</strain>
    </source>
</reference>
<reference key="2">
    <citation type="journal article" date="1999" name="Nature">
        <title>Sequence and analysis of chromosome 4 of the plant Arabidopsis thaliana.</title>
        <authorList>
            <person name="Mayer K.F.X."/>
            <person name="Schueller C."/>
            <person name="Wambutt R."/>
            <person name="Murphy G."/>
            <person name="Volckaert G."/>
            <person name="Pohl T."/>
            <person name="Duesterhoeft A."/>
            <person name="Stiekema W."/>
            <person name="Entian K.-D."/>
            <person name="Terryn N."/>
            <person name="Harris B."/>
            <person name="Ansorge W."/>
            <person name="Brandt P."/>
            <person name="Grivell L.A."/>
            <person name="Rieger M."/>
            <person name="Weichselgartner M."/>
            <person name="de Simone V."/>
            <person name="Obermaier B."/>
            <person name="Mache R."/>
            <person name="Mueller M."/>
            <person name="Kreis M."/>
            <person name="Delseny M."/>
            <person name="Puigdomenech P."/>
            <person name="Watson M."/>
            <person name="Schmidtheini T."/>
            <person name="Reichert B."/>
            <person name="Portetelle D."/>
            <person name="Perez-Alonso M."/>
            <person name="Boutry M."/>
            <person name="Bancroft I."/>
            <person name="Vos P."/>
            <person name="Hoheisel J."/>
            <person name="Zimmermann W."/>
            <person name="Wedler H."/>
            <person name="Ridley P."/>
            <person name="Langham S.-A."/>
            <person name="McCullagh B."/>
            <person name="Bilham L."/>
            <person name="Robben J."/>
            <person name="van der Schueren J."/>
            <person name="Grymonprez B."/>
            <person name="Chuang Y.-J."/>
            <person name="Vandenbussche F."/>
            <person name="Braeken M."/>
            <person name="Weltjens I."/>
            <person name="Voet M."/>
            <person name="Bastiaens I."/>
            <person name="Aert R."/>
            <person name="Defoor E."/>
            <person name="Weitzenegger T."/>
            <person name="Bothe G."/>
            <person name="Ramsperger U."/>
            <person name="Hilbert H."/>
            <person name="Braun M."/>
            <person name="Holzer E."/>
            <person name="Brandt A."/>
            <person name="Peters S."/>
            <person name="van Staveren M."/>
            <person name="Dirkse W."/>
            <person name="Mooijman P."/>
            <person name="Klein Lankhorst R."/>
            <person name="Rose M."/>
            <person name="Hauf J."/>
            <person name="Koetter P."/>
            <person name="Berneiser S."/>
            <person name="Hempel S."/>
            <person name="Feldpausch M."/>
            <person name="Lamberth S."/>
            <person name="Van den Daele H."/>
            <person name="De Keyser A."/>
            <person name="Buysshaert C."/>
            <person name="Gielen J."/>
            <person name="Villarroel R."/>
            <person name="De Clercq R."/>
            <person name="van Montagu M."/>
            <person name="Rogers J."/>
            <person name="Cronin A."/>
            <person name="Quail M.A."/>
            <person name="Bray-Allen S."/>
            <person name="Clark L."/>
            <person name="Doggett J."/>
            <person name="Hall S."/>
            <person name="Kay M."/>
            <person name="Lennard N."/>
            <person name="McLay K."/>
            <person name="Mayes R."/>
            <person name="Pettett A."/>
            <person name="Rajandream M.A."/>
            <person name="Lyne M."/>
            <person name="Benes V."/>
            <person name="Rechmann S."/>
            <person name="Borkova D."/>
            <person name="Bloecker H."/>
            <person name="Scharfe M."/>
            <person name="Grimm M."/>
            <person name="Loehnert T.-H."/>
            <person name="Dose S."/>
            <person name="de Haan M."/>
            <person name="Maarse A.C."/>
            <person name="Schaefer M."/>
            <person name="Mueller-Auer S."/>
            <person name="Gabel C."/>
            <person name="Fuchs M."/>
            <person name="Fartmann B."/>
            <person name="Granderath K."/>
            <person name="Dauner D."/>
            <person name="Herzl A."/>
            <person name="Neumann S."/>
            <person name="Argiriou A."/>
            <person name="Vitale D."/>
            <person name="Liguori R."/>
            <person name="Piravandi E."/>
            <person name="Massenet O."/>
            <person name="Quigley F."/>
            <person name="Clabauld G."/>
            <person name="Muendlein A."/>
            <person name="Felber R."/>
            <person name="Schnabl S."/>
            <person name="Hiller R."/>
            <person name="Schmidt W."/>
            <person name="Lecharny A."/>
            <person name="Aubourg S."/>
            <person name="Chefdor F."/>
            <person name="Cooke R."/>
            <person name="Berger C."/>
            <person name="Monfort A."/>
            <person name="Casacuberta E."/>
            <person name="Gibbons T."/>
            <person name="Weber N."/>
            <person name="Vandenbol M."/>
            <person name="Bargues M."/>
            <person name="Terol J."/>
            <person name="Torres A."/>
            <person name="Perez-Perez A."/>
            <person name="Purnelle B."/>
            <person name="Bent E."/>
            <person name="Johnson S."/>
            <person name="Tacon D."/>
            <person name="Jesse T."/>
            <person name="Heijnen L."/>
            <person name="Schwarz S."/>
            <person name="Scholler P."/>
            <person name="Heber S."/>
            <person name="Francs P."/>
            <person name="Bielke C."/>
            <person name="Frishman D."/>
            <person name="Haase D."/>
            <person name="Lemcke K."/>
            <person name="Mewes H.-W."/>
            <person name="Stocker S."/>
            <person name="Zaccaria P."/>
            <person name="Bevan M."/>
            <person name="Wilson R.K."/>
            <person name="de la Bastide M."/>
            <person name="Habermann K."/>
            <person name="Parnell L."/>
            <person name="Dedhia N."/>
            <person name="Gnoj L."/>
            <person name="Schutz K."/>
            <person name="Huang E."/>
            <person name="Spiegel L."/>
            <person name="Sekhon M."/>
            <person name="Murray J."/>
            <person name="Sheet P."/>
            <person name="Cordes M."/>
            <person name="Abu-Threideh J."/>
            <person name="Stoneking T."/>
            <person name="Kalicki J."/>
            <person name="Graves T."/>
            <person name="Harmon G."/>
            <person name="Edwards J."/>
            <person name="Latreille P."/>
            <person name="Courtney L."/>
            <person name="Cloud J."/>
            <person name="Abbott A."/>
            <person name="Scott K."/>
            <person name="Johnson D."/>
            <person name="Minx P."/>
            <person name="Bentley D."/>
            <person name="Fulton B."/>
            <person name="Miller N."/>
            <person name="Greco T."/>
            <person name="Kemp K."/>
            <person name="Kramer J."/>
            <person name="Fulton L."/>
            <person name="Mardis E."/>
            <person name="Dante M."/>
            <person name="Pepin K."/>
            <person name="Hillier L.W."/>
            <person name="Nelson J."/>
            <person name="Spieth J."/>
            <person name="Ryan E."/>
            <person name="Andrews S."/>
            <person name="Geisel C."/>
            <person name="Layman D."/>
            <person name="Du H."/>
            <person name="Ali J."/>
            <person name="Berghoff A."/>
            <person name="Jones K."/>
            <person name="Drone K."/>
            <person name="Cotton M."/>
            <person name="Joshu C."/>
            <person name="Antonoiu B."/>
            <person name="Zidanic M."/>
            <person name="Strong C."/>
            <person name="Sun H."/>
            <person name="Lamar B."/>
            <person name="Yordan C."/>
            <person name="Ma P."/>
            <person name="Zhong J."/>
            <person name="Preston R."/>
            <person name="Vil D."/>
            <person name="Shekher M."/>
            <person name="Matero A."/>
            <person name="Shah R."/>
            <person name="Swaby I.K."/>
            <person name="O'Shaughnessy A."/>
            <person name="Rodriguez M."/>
            <person name="Hoffman J."/>
            <person name="Till S."/>
            <person name="Granat S."/>
            <person name="Shohdy N."/>
            <person name="Hasegawa A."/>
            <person name="Hameed A."/>
            <person name="Lodhi M."/>
            <person name="Johnson A."/>
            <person name="Chen E."/>
            <person name="Marra M.A."/>
            <person name="Martienssen R."/>
            <person name="McCombie W.R."/>
        </authorList>
    </citation>
    <scope>NUCLEOTIDE SEQUENCE [LARGE SCALE GENOMIC DNA]</scope>
    <source>
        <strain>cv. Columbia</strain>
    </source>
</reference>
<reference key="3">
    <citation type="journal article" date="2017" name="Plant J.">
        <title>Araport11: a complete reannotation of the Arabidopsis thaliana reference genome.</title>
        <authorList>
            <person name="Cheng C.Y."/>
            <person name="Krishnakumar V."/>
            <person name="Chan A.P."/>
            <person name="Thibaud-Nissen F."/>
            <person name="Schobel S."/>
            <person name="Town C.D."/>
        </authorList>
    </citation>
    <scope>GENOME REANNOTATION</scope>
    <source>
        <strain>cv. Columbia</strain>
    </source>
</reference>
<reference key="4">
    <citation type="journal article" date="2005" name="Plant Sci.">
        <title>Reduced expression of a protein homologous to glycogenin leads to reduction of starch content in Arabidopsis leaves.</title>
        <authorList>
            <person name="Chatterjee M."/>
            <person name="Berbezy P."/>
            <person name="Vyas D."/>
            <person name="Coates S."/>
            <person name="Barsby T."/>
        </authorList>
        <dbReference type="AGRICOLA" id="IND43669941"/>
    </citation>
    <scope>GENE FAMILY</scope>
</reference>
<evidence type="ECO:0000250" key="1">
    <source>
        <dbReference type="UniProtKB" id="P13280"/>
    </source>
</evidence>
<evidence type="ECO:0000250" key="2">
    <source>
        <dbReference type="UniProtKB" id="P46976"/>
    </source>
</evidence>
<evidence type="ECO:0000255" key="3"/>
<evidence type="ECO:0000305" key="4"/>